<proteinExistence type="inferred from homology"/>
<feature type="chain" id="PRO_1000073437" description="Large ribosomal subunit protein bL17">
    <location>
        <begin position="1"/>
        <end position="122"/>
    </location>
</feature>
<accession>A6QJ65</accession>
<protein>
    <recommendedName>
        <fullName evidence="1">Large ribosomal subunit protein bL17</fullName>
    </recommendedName>
    <alternativeName>
        <fullName evidence="2">50S ribosomal protein L17</fullName>
    </alternativeName>
</protein>
<name>RL17_STAAE</name>
<comment type="subunit">
    <text evidence="1">Part of the 50S ribosomal subunit. Contacts protein L32.</text>
</comment>
<comment type="similarity">
    <text evidence="1">Belongs to the bacterial ribosomal protein bL17 family.</text>
</comment>
<dbReference type="EMBL" id="AP009351">
    <property type="protein sequence ID" value="BAF68397.1"/>
    <property type="molecule type" value="Genomic_DNA"/>
</dbReference>
<dbReference type="RefSeq" id="WP_000542274.1">
    <property type="nucleotide sequence ID" value="NZ_JBBIAE010000006.1"/>
</dbReference>
<dbReference type="SMR" id="A6QJ65"/>
<dbReference type="GeneID" id="98346535"/>
<dbReference type="KEGG" id="sae:NWMN_2125"/>
<dbReference type="HOGENOM" id="CLU_074407_2_2_9"/>
<dbReference type="Proteomes" id="UP000006386">
    <property type="component" value="Chromosome"/>
</dbReference>
<dbReference type="GO" id="GO:0022625">
    <property type="term" value="C:cytosolic large ribosomal subunit"/>
    <property type="evidence" value="ECO:0007669"/>
    <property type="project" value="TreeGrafter"/>
</dbReference>
<dbReference type="GO" id="GO:0003735">
    <property type="term" value="F:structural constituent of ribosome"/>
    <property type="evidence" value="ECO:0007669"/>
    <property type="project" value="InterPro"/>
</dbReference>
<dbReference type="GO" id="GO:0006412">
    <property type="term" value="P:translation"/>
    <property type="evidence" value="ECO:0007669"/>
    <property type="project" value="UniProtKB-UniRule"/>
</dbReference>
<dbReference type="FunFam" id="3.90.1030.10:FF:000002">
    <property type="entry name" value="50S ribosomal protein L17"/>
    <property type="match status" value="1"/>
</dbReference>
<dbReference type="Gene3D" id="3.90.1030.10">
    <property type="entry name" value="Ribosomal protein L17"/>
    <property type="match status" value="1"/>
</dbReference>
<dbReference type="HAMAP" id="MF_01368">
    <property type="entry name" value="Ribosomal_bL17"/>
    <property type="match status" value="1"/>
</dbReference>
<dbReference type="InterPro" id="IPR000456">
    <property type="entry name" value="Ribosomal_bL17"/>
</dbReference>
<dbReference type="InterPro" id="IPR047859">
    <property type="entry name" value="Ribosomal_bL17_CS"/>
</dbReference>
<dbReference type="InterPro" id="IPR036373">
    <property type="entry name" value="Ribosomal_bL17_sf"/>
</dbReference>
<dbReference type="NCBIfam" id="TIGR00059">
    <property type="entry name" value="L17"/>
    <property type="match status" value="1"/>
</dbReference>
<dbReference type="PANTHER" id="PTHR14413:SF16">
    <property type="entry name" value="LARGE RIBOSOMAL SUBUNIT PROTEIN BL17M"/>
    <property type="match status" value="1"/>
</dbReference>
<dbReference type="PANTHER" id="PTHR14413">
    <property type="entry name" value="RIBOSOMAL PROTEIN L17"/>
    <property type="match status" value="1"/>
</dbReference>
<dbReference type="Pfam" id="PF01196">
    <property type="entry name" value="Ribosomal_L17"/>
    <property type="match status" value="1"/>
</dbReference>
<dbReference type="SUPFAM" id="SSF64263">
    <property type="entry name" value="Prokaryotic ribosomal protein L17"/>
    <property type="match status" value="1"/>
</dbReference>
<dbReference type="PROSITE" id="PS01167">
    <property type="entry name" value="RIBOSOMAL_L17"/>
    <property type="match status" value="1"/>
</dbReference>
<reference key="1">
    <citation type="journal article" date="2008" name="J. Bacteriol.">
        <title>Genome sequence of Staphylococcus aureus strain Newman and comparative analysis of staphylococcal genomes: polymorphism and evolution of two major pathogenicity islands.</title>
        <authorList>
            <person name="Baba T."/>
            <person name="Bae T."/>
            <person name="Schneewind O."/>
            <person name="Takeuchi F."/>
            <person name="Hiramatsu K."/>
        </authorList>
    </citation>
    <scope>NUCLEOTIDE SEQUENCE [LARGE SCALE GENOMIC DNA]</scope>
    <source>
        <strain>Newman</strain>
    </source>
</reference>
<organism>
    <name type="scientific">Staphylococcus aureus (strain Newman)</name>
    <dbReference type="NCBI Taxonomy" id="426430"/>
    <lineage>
        <taxon>Bacteria</taxon>
        <taxon>Bacillati</taxon>
        <taxon>Bacillota</taxon>
        <taxon>Bacilli</taxon>
        <taxon>Bacillales</taxon>
        <taxon>Staphylococcaceae</taxon>
        <taxon>Staphylococcus</taxon>
    </lineage>
</organism>
<keyword id="KW-0687">Ribonucleoprotein</keyword>
<keyword id="KW-0689">Ribosomal protein</keyword>
<sequence>MGYRKLGRTSDQRKAMLRDLATSLIISERIETTEARAKEVRSVVEKLITLGKKGDLASRRNAAKTLRNVEILNEDETTQTALQKLFGEIAERYTERQGGYTRILKQGPRRGDGAESVIIELV</sequence>
<gene>
    <name evidence="1" type="primary">rplQ</name>
    <name type="ordered locus">NWMN_2125</name>
</gene>
<evidence type="ECO:0000255" key="1">
    <source>
        <dbReference type="HAMAP-Rule" id="MF_01368"/>
    </source>
</evidence>
<evidence type="ECO:0000305" key="2"/>